<comment type="function">
    <text evidence="3 4 5 6">Together with the zinc finger protein ztf-16, plays a role in gonadogenesis, specifically in somatic gonad precursor cell development (PubMed:12756172, PubMed:15294864, PubMed:20026024, PubMed:24402584). This is possibly by regulating tra-1 gene expression (PubMed:15294864).</text>
</comment>
<comment type="function">
    <molecule>Isoform a</molecule>
    <text evidence="5">Required for proper gonadal primordium assembly and somatic gonad precursor cell morphology.</text>
</comment>
<comment type="subcellular location">
    <subcellularLocation>
        <location evidence="4 5">Nucleus</location>
    </subcellularLocation>
</comment>
<comment type="alternative products">
    <event type="alternative splicing"/>
    <isoform>
        <id>Q65XX7-1</id>
        <name evidence="9">a</name>
        <sequence type="displayed"/>
    </isoform>
    <isoform>
        <id>Q65XX7-2</id>
        <name evidence="10">b</name>
        <sequence type="described" ref="VSP_060360"/>
    </isoform>
    <isoform>
        <id>Q65XX7-3</id>
        <name evidence="11">c</name>
        <sequence type="described" ref="VSP_060360 VSP_060361"/>
    </isoform>
</comment>
<comment type="developmental stage">
    <text evidence="4 5 6">Expressed during embryogenesis (at protein level) (PubMed:20026024). First expressed shortly after the assembly of the gonad primordium (PubMed:15294864). Expressed in somatic gonadal precursor (SGP) cells in embryos and L1 stage larvae (PubMed:20026024, PubMed:24402584). Expressed in daughter cells of SGP cells throughout the L1 larval stage (PubMed:20026024).</text>
</comment>
<comment type="disruption phenotype">
    <text evidence="4">RNAi-mediated knockdown results in abnormal gonadal development in 10% of animals whereby gonads fail to divide or grow in size (PubMed:15294864). This abnormality is enhanced in a tra-1 (e1099) mutant background and is accompanied by masculinization of gonadal tissues (PubMed:15294864).</text>
</comment>
<comment type="similarity">
    <text evidence="7">Belongs to the krueppel C2H2-type zinc-finger protein family.</text>
</comment>
<protein>
    <recommendedName>
        <fullName evidence="7">Zinc finger protein ehn-3</fullName>
    </recommendedName>
    <alternativeName>
        <fullName evidence="9">Enhancer of hand mutation protein 3</fullName>
    </alternativeName>
</protein>
<organism evidence="8">
    <name type="scientific">Caenorhabditis elegans</name>
    <dbReference type="NCBI Taxonomy" id="6239"/>
    <lineage>
        <taxon>Eukaryota</taxon>
        <taxon>Metazoa</taxon>
        <taxon>Ecdysozoa</taxon>
        <taxon>Nematoda</taxon>
        <taxon>Chromadorea</taxon>
        <taxon>Rhabditida</taxon>
        <taxon>Rhabditina</taxon>
        <taxon>Rhabditomorpha</taxon>
        <taxon>Rhabditoidea</taxon>
        <taxon>Rhabditidae</taxon>
        <taxon>Peloderinae</taxon>
        <taxon>Caenorhabditis</taxon>
    </lineage>
</organism>
<keyword id="KW-0025">Alternative splicing</keyword>
<keyword id="KW-0479">Metal-binding</keyword>
<keyword id="KW-0539">Nucleus</keyword>
<keyword id="KW-1185">Reference proteome</keyword>
<keyword id="KW-0677">Repeat</keyword>
<keyword id="KW-0804">Transcription</keyword>
<keyword id="KW-0805">Transcription regulation</keyword>
<keyword id="KW-0862">Zinc</keyword>
<keyword id="KW-0863">Zinc-finger</keyword>
<reference evidence="8" key="1">
    <citation type="journal article" date="1998" name="Science">
        <title>Genome sequence of the nematode C. elegans: a platform for investigating biology.</title>
        <authorList>
            <consortium name="The C. elegans sequencing consortium"/>
        </authorList>
    </citation>
    <scope>NUCLEOTIDE SEQUENCE [LARGE SCALE GENOMIC DNA]</scope>
    <source>
        <strain evidence="8">Bristol N2</strain>
    </source>
</reference>
<reference evidence="7" key="2">
    <citation type="journal article" date="2003" name="Development">
        <title>The C. elegans Hand gene controls embryogenesis and early gonadogenesis.</title>
        <authorList>
            <person name="Mathies L.D."/>
            <person name="Henderson S.T."/>
            <person name="Kimble J."/>
        </authorList>
    </citation>
    <scope>FUNCTION</scope>
    <scope>MUTAGENESIS OF ARG-41</scope>
</reference>
<reference evidence="7" key="3">
    <citation type="journal article" date="2004" name="Development">
        <title>TRA-1/GLI controls development of somatic gonadal precursors in C. elegans.</title>
        <authorList>
            <person name="Mathies L.D."/>
            <person name="Schvarzstein M."/>
            <person name="Morphy K.M."/>
            <person name="Blelloch R."/>
            <person name="Spence A.M."/>
            <person name="Kimble J."/>
        </authorList>
    </citation>
    <scope>FUNCTION</scope>
    <scope>SUBCELLULAR LOCATION</scope>
    <scope>DEVELOPMENTAL STAGE</scope>
    <scope>DISRUPTION PHENOTYPE</scope>
</reference>
<reference evidence="7" key="4">
    <citation type="journal article" date="2010" name="Dev. Biol.">
        <title>hunchback and Ikaros-like zinc finger genes control reproductive system development in Caenorhabditis elegans.</title>
        <authorList>
            <person name="Large E.E."/>
            <person name="Mathies L.D."/>
        </authorList>
    </citation>
    <scope>FUNCTION (ISOFORMS A AND B)</scope>
    <scope>SUBCELLULAR LOCATION</scope>
    <scope>DEVELOPMENTAL STAGE</scope>
</reference>
<reference evidence="7" key="5">
    <citation type="journal article" date="2014" name="G3 (Bethesda)">
        <title>Caenorhabditis elegans SWI/SNF subunits control sequential developmental stages in the somatic gonad.</title>
        <authorList>
            <person name="Large E.E."/>
            <person name="Mathies L.D."/>
        </authorList>
    </citation>
    <scope>FUNCTION</scope>
    <scope>DEVELOPMENTAL STAGE</scope>
</reference>
<accession>Q65XX7</accession>
<accession>H2L026</accession>
<accession>Q9N4M6</accession>
<name>EHN3_CAEEL</name>
<feature type="chain" id="PRO_0000448222" description="Zinc finger protein ehn-3">
    <location>
        <begin position="1"/>
        <end position="262"/>
    </location>
</feature>
<feature type="zinc finger region" description="C2H2-type 1" evidence="1">
    <location>
        <begin position="2"/>
        <end position="24"/>
    </location>
</feature>
<feature type="zinc finger region" description="C2H2-type 2" evidence="1">
    <location>
        <begin position="30"/>
        <end position="52"/>
    </location>
</feature>
<feature type="zinc finger region" description="C2H2-type 3" evidence="1">
    <location>
        <begin position="59"/>
        <end position="84"/>
    </location>
</feature>
<feature type="zinc finger region" description="C2H2-type 4" evidence="1">
    <location>
        <begin position="92"/>
        <end position="115"/>
    </location>
</feature>
<feature type="zinc finger region" description="C2H2-type 5" evidence="1">
    <location>
        <begin position="208"/>
        <end position="230"/>
    </location>
</feature>
<feature type="zinc finger region" description="C2H2-type 6" evidence="1">
    <location>
        <begin position="236"/>
        <end position="260"/>
    </location>
</feature>
<feature type="region of interest" description="Disordered" evidence="2">
    <location>
        <begin position="179"/>
        <end position="204"/>
    </location>
</feature>
<feature type="compositionally biased region" description="Low complexity" evidence="2">
    <location>
        <begin position="185"/>
        <end position="194"/>
    </location>
</feature>
<feature type="compositionally biased region" description="Acidic residues" evidence="2">
    <location>
        <begin position="195"/>
        <end position="204"/>
    </location>
</feature>
<feature type="splice variant" id="VSP_060360" description="In isoform b and isoform c." evidence="7">
    <location>
        <begin position="1"/>
        <end position="44"/>
    </location>
</feature>
<feature type="splice variant" id="VSP_060361" description="In isoform c." evidence="7">
    <location>
        <begin position="120"/>
        <end position="162"/>
    </location>
</feature>
<feature type="mutagenesis site" description="In q689; some adult mutants show gonadal defects, which become more prevalent on an hnd-1 mutant background. Absent or misplaced somatic gonadal precursor cells (SGPs) in the gonadal primordium during embryogenesis." evidence="3">
    <original>R</original>
    <variation>W</variation>
    <location>
        <position position="41"/>
    </location>
</feature>
<proteinExistence type="evidence at protein level"/>
<sequence length="262" mass="30422">MEKCDICHQKFSNKTNLNRHKVMHSGKKKFECQFCRRPFFRNDRMKEHMMTHIKKGNTFECPITACNSKFNSFTSLQFHVDSEHIIRGSSPAKCKSCIKWFNSSHRLLLHFHTAHLDHTKFFSFKPAPILPKSTTSILNPIKNPDDFDRIFDFFKTEIAPLFPLHSTVSQAPLPQCSRSVKSAKELSPTPSTEIETPEEEELDGPESWYCDYCKIRFDDKVMWYLHSGLHSDDIPFKCSLCGSLCDGKYDFAAHLVYANHNF</sequence>
<evidence type="ECO:0000255" key="1">
    <source>
        <dbReference type="PROSITE-ProRule" id="PRU00042"/>
    </source>
</evidence>
<evidence type="ECO:0000256" key="2">
    <source>
        <dbReference type="SAM" id="MobiDB-lite"/>
    </source>
</evidence>
<evidence type="ECO:0000269" key="3">
    <source>
    </source>
</evidence>
<evidence type="ECO:0000269" key="4">
    <source>
    </source>
</evidence>
<evidence type="ECO:0000269" key="5">
    <source>
    </source>
</evidence>
<evidence type="ECO:0000269" key="6">
    <source>
    </source>
</evidence>
<evidence type="ECO:0000305" key="7"/>
<evidence type="ECO:0000312" key="8">
    <source>
        <dbReference type="Proteomes" id="UP000001940"/>
    </source>
</evidence>
<evidence type="ECO:0000312" key="9">
    <source>
        <dbReference type="WormBase" id="ZK616.10a"/>
    </source>
</evidence>
<evidence type="ECO:0000312" key="10">
    <source>
        <dbReference type="WormBase" id="ZK616.10b"/>
    </source>
</evidence>
<evidence type="ECO:0000312" key="11">
    <source>
        <dbReference type="WormBase" id="ZK616.10c"/>
    </source>
</evidence>
<gene>
    <name evidence="9" type="primary">ehn-3</name>
    <name evidence="9" type="ORF">ZK616.10</name>
</gene>
<dbReference type="EMBL" id="BX284604">
    <property type="protein sequence ID" value="CCD71116.1"/>
    <property type="molecule type" value="Genomic_DNA"/>
</dbReference>
<dbReference type="EMBL" id="BX284604">
    <property type="protein sequence ID" value="CCD71117.1"/>
    <property type="molecule type" value="Genomic_DNA"/>
</dbReference>
<dbReference type="EMBL" id="BX284604">
    <property type="protein sequence ID" value="CCD71118.1"/>
    <property type="molecule type" value="Genomic_DNA"/>
</dbReference>
<dbReference type="RefSeq" id="NP_001023615.1">
    <molecule id="Q65XX7-1"/>
    <property type="nucleotide sequence ID" value="NM_001028444.3"/>
</dbReference>
<dbReference type="RefSeq" id="NP_001023616.1">
    <molecule id="Q65XX7-2"/>
    <property type="nucleotide sequence ID" value="NM_001028445.1"/>
</dbReference>
<dbReference type="RefSeq" id="NP_001023617.1">
    <molecule id="Q65XX7-3"/>
    <property type="nucleotide sequence ID" value="NM_001028446.1"/>
</dbReference>
<dbReference type="FunCoup" id="Q65XX7">
    <property type="interactions" value="104"/>
</dbReference>
<dbReference type="IntAct" id="Q65XX7">
    <property type="interactions" value="44"/>
</dbReference>
<dbReference type="STRING" id="6239.ZK616.10a.1"/>
<dbReference type="PaxDb" id="6239-ZK616.10a"/>
<dbReference type="EnsemblMetazoa" id="ZK616.10a.1">
    <molecule id="Q65XX7-1"/>
    <property type="protein sequence ID" value="ZK616.10a.1"/>
    <property type="gene ID" value="WBGene00001223"/>
</dbReference>
<dbReference type="EnsemblMetazoa" id="ZK616.10b.1">
    <molecule id="Q65XX7-2"/>
    <property type="protein sequence ID" value="ZK616.10b.1"/>
    <property type="gene ID" value="WBGene00001223"/>
</dbReference>
<dbReference type="EnsemblMetazoa" id="ZK616.10c.1">
    <molecule id="Q65XX7-3"/>
    <property type="protein sequence ID" value="ZK616.10c.1"/>
    <property type="gene ID" value="WBGene00001223"/>
</dbReference>
<dbReference type="GeneID" id="191363"/>
<dbReference type="KEGG" id="cel:CELE_ZK616.10"/>
<dbReference type="UCSC" id="ZK616.10a">
    <property type="organism name" value="c. elegans"/>
</dbReference>
<dbReference type="AGR" id="WB:WBGene00001223"/>
<dbReference type="CTD" id="191363"/>
<dbReference type="WormBase" id="ZK616.10a">
    <molecule id="Q65XX7-1"/>
    <property type="protein sequence ID" value="CE37599"/>
    <property type="gene ID" value="WBGene00001223"/>
    <property type="gene designation" value="ehn-3"/>
</dbReference>
<dbReference type="WormBase" id="ZK616.10b">
    <molecule id="Q65XX7-2"/>
    <property type="protein sequence ID" value="CE26343"/>
    <property type="gene ID" value="WBGene00001223"/>
    <property type="gene designation" value="ehn-3"/>
</dbReference>
<dbReference type="WormBase" id="ZK616.10c">
    <molecule id="Q65XX7-3"/>
    <property type="protein sequence ID" value="CE37600"/>
    <property type="gene ID" value="WBGene00001223"/>
    <property type="gene designation" value="ehn-3"/>
</dbReference>
<dbReference type="eggNOG" id="KOG1721">
    <property type="taxonomic scope" value="Eukaryota"/>
</dbReference>
<dbReference type="GeneTree" id="ENSGT00720000109290"/>
<dbReference type="HOGENOM" id="CLU_016943_1_0_1"/>
<dbReference type="InParanoid" id="Q65XX7"/>
<dbReference type="OMA" id="SEYKVEC"/>
<dbReference type="OrthoDB" id="6591996at2759"/>
<dbReference type="PhylomeDB" id="Q65XX7"/>
<dbReference type="PRO" id="PR:Q65XX7"/>
<dbReference type="Proteomes" id="UP000001940">
    <property type="component" value="Chromosome IV"/>
</dbReference>
<dbReference type="Bgee" id="WBGene00001223">
    <property type="expression patterns" value="Expressed in embryo and 1 other cell type or tissue"/>
</dbReference>
<dbReference type="GO" id="GO:0005634">
    <property type="term" value="C:nucleus"/>
    <property type="evidence" value="ECO:0000314"/>
    <property type="project" value="WormBase"/>
</dbReference>
<dbReference type="GO" id="GO:0003700">
    <property type="term" value="F:DNA-binding transcription factor activity"/>
    <property type="evidence" value="ECO:0000318"/>
    <property type="project" value="GO_Central"/>
</dbReference>
<dbReference type="GO" id="GO:0000978">
    <property type="term" value="F:RNA polymerase II cis-regulatory region sequence-specific DNA binding"/>
    <property type="evidence" value="ECO:0000318"/>
    <property type="project" value="GO_Central"/>
</dbReference>
<dbReference type="GO" id="GO:0008270">
    <property type="term" value="F:zinc ion binding"/>
    <property type="evidence" value="ECO:0007669"/>
    <property type="project" value="UniProtKB-KW"/>
</dbReference>
<dbReference type="GO" id="GO:0008406">
    <property type="term" value="P:gonad development"/>
    <property type="evidence" value="ECO:0000315"/>
    <property type="project" value="UniProtKB"/>
</dbReference>
<dbReference type="GO" id="GO:0010628">
    <property type="term" value="P:positive regulation of gene expression"/>
    <property type="evidence" value="ECO:0000315"/>
    <property type="project" value="WormBase"/>
</dbReference>
<dbReference type="GO" id="GO:0006357">
    <property type="term" value="P:regulation of transcription by RNA polymerase II"/>
    <property type="evidence" value="ECO:0000318"/>
    <property type="project" value="GO_Central"/>
</dbReference>
<dbReference type="FunFam" id="3.30.160.60:FF:002742">
    <property type="entry name" value="Zinc finger protein Pegasus"/>
    <property type="match status" value="1"/>
</dbReference>
<dbReference type="Gene3D" id="3.30.160.60">
    <property type="entry name" value="Classic Zinc Finger"/>
    <property type="match status" value="4"/>
</dbReference>
<dbReference type="InterPro" id="IPR036236">
    <property type="entry name" value="Znf_C2H2_sf"/>
</dbReference>
<dbReference type="InterPro" id="IPR013087">
    <property type="entry name" value="Znf_C2H2_type"/>
</dbReference>
<dbReference type="PANTHER" id="PTHR24376:SF235">
    <property type="entry name" value="C2H2-TYPE DOMAIN-CONTAINING PROTEIN"/>
    <property type="match status" value="1"/>
</dbReference>
<dbReference type="PANTHER" id="PTHR24376">
    <property type="entry name" value="ZINC FINGER PROTEIN"/>
    <property type="match status" value="1"/>
</dbReference>
<dbReference type="SMART" id="SM00355">
    <property type="entry name" value="ZnF_C2H2"/>
    <property type="match status" value="6"/>
</dbReference>
<dbReference type="SUPFAM" id="SSF57667">
    <property type="entry name" value="beta-beta-alpha zinc fingers"/>
    <property type="match status" value="2"/>
</dbReference>
<dbReference type="PROSITE" id="PS00028">
    <property type="entry name" value="ZINC_FINGER_C2H2_1"/>
    <property type="match status" value="6"/>
</dbReference>
<dbReference type="PROSITE" id="PS50157">
    <property type="entry name" value="ZINC_FINGER_C2H2_2"/>
    <property type="match status" value="2"/>
</dbReference>